<protein>
    <recommendedName>
        <fullName>Uncharacterized protein YubC</fullName>
    </recommendedName>
</protein>
<keyword id="KW-0614">Plasmid</keyword>
<sequence length="101" mass="11429">MTETGGQPPVSFPVKDVAGLLFLLRRLTRRGRNAACGQCPASGWARDGRFYRSRLASVTVYASPSPFSDERPSSRFRGIFSPSKRRRLRYSTVGLTRYRTR</sequence>
<organism>
    <name type="scientific">Escherichia coli (strain K12)</name>
    <dbReference type="NCBI Taxonomy" id="83333"/>
    <lineage>
        <taxon>Bacteria</taxon>
        <taxon>Pseudomonadati</taxon>
        <taxon>Pseudomonadota</taxon>
        <taxon>Gammaproteobacteria</taxon>
        <taxon>Enterobacterales</taxon>
        <taxon>Enterobacteriaceae</taxon>
        <taxon>Escherichia</taxon>
    </lineage>
</organism>
<name>YUBC_ECOLI</name>
<gene>
    <name type="primary">yubC</name>
    <name type="synonym">yfdB</name>
    <name type="ordered locus">ECOK12F051</name>
</gene>
<reference key="1">
    <citation type="journal article" date="1999" name="Plasmid">
        <title>Nucleotide sequence of the F plasmid leading region.</title>
        <authorList>
            <person name="Manwaring N.P."/>
            <person name="Skurray R.A."/>
            <person name="Firth N."/>
        </authorList>
    </citation>
    <scope>NUCLEOTIDE SEQUENCE [GENOMIC DNA]</scope>
</reference>
<reference key="2">
    <citation type="submission" date="2000-04" db="EMBL/GenBank/DDBJ databases">
        <title>Complete nucleotide sequence of the F plasmid: its implications for organization and diversification of plasmid genomes.</title>
        <authorList>
            <person name="Shimizu H."/>
            <person name="Saitoh Y."/>
            <person name="Suda Y."/>
            <person name="Uehara K."/>
            <person name="Sampei G."/>
            <person name="Mizobuchi K."/>
        </authorList>
    </citation>
    <scope>NUCLEOTIDE SEQUENCE [LARGE SCALE GENOMIC DNA]</scope>
    <source>
        <strain>K12 / CR63</strain>
    </source>
</reference>
<accession>Q9S4X3</accession>
<accession>Q7AJQ6</accession>
<feature type="chain" id="PRO_0000263039" description="Uncharacterized protein YubC">
    <location>
        <begin position="1"/>
        <end position="101"/>
    </location>
</feature>
<proteinExistence type="predicted"/>
<dbReference type="EMBL" id="AF106329">
    <property type="protein sequence ID" value="AAD47177.1"/>
    <property type="molecule type" value="Genomic_DNA"/>
</dbReference>
<dbReference type="EMBL" id="AP001918">
    <property type="protein sequence ID" value="BAA97921.1"/>
    <property type="molecule type" value="Genomic_DNA"/>
</dbReference>
<dbReference type="RefSeq" id="NP_061430.1">
    <property type="nucleotide sequence ID" value="NC_002483.1"/>
</dbReference>
<dbReference type="RefSeq" id="WP_010892536.1">
    <property type="nucleotide sequence ID" value="NZ_JACEFS010000057.1"/>
</dbReference>
<dbReference type="KEGG" id="ecoc:C3026_24355"/>
<geneLocation type="plasmid">
    <name>F</name>
</geneLocation>